<sequence>MVKKNFIPSVSLVRRDLPTLVTTTTSSTALSKPTSSVVSETSSKSLPSLTSSAFSTSSGTTSSSSLIVASITPPSTVGNPFILNAADKPNGTVYIAVGAVIGAIFISILIWWLVSNYLSRRFTMTNSYANDSKNLYRGHHKHSSSLQSNPFDINDEKSYMQDDWDSMSQLESSQYEDAASPFNPIQDPFTDNRRSLFISPTLQVSQYEKSHSRHQSKDTNIFIDDPSLYVGTYLEEEEEEERKLNLNRPQRAASPERKEKKINSMEGYHKRNQSSLGLIPVASATSNTSSPKKAHKRQAPSMFLDDVLNGREII</sequence>
<dbReference type="EMBL" id="AAFW02000067">
    <property type="protein sequence ID" value="EDN62753.1"/>
    <property type="molecule type" value="Genomic_DNA"/>
</dbReference>
<dbReference type="HOGENOM" id="CLU_061224_0_0_1"/>
<dbReference type="Proteomes" id="UP000007060">
    <property type="component" value="Unassembled WGS sequence"/>
</dbReference>
<dbReference type="GO" id="GO:0005935">
    <property type="term" value="C:cellular bud neck"/>
    <property type="evidence" value="ECO:0007669"/>
    <property type="project" value="TreeGrafter"/>
</dbReference>
<dbReference type="GO" id="GO:0000324">
    <property type="term" value="C:fungal-type vacuole"/>
    <property type="evidence" value="ECO:0007669"/>
    <property type="project" value="TreeGrafter"/>
</dbReference>
<dbReference type="GO" id="GO:0005774">
    <property type="term" value="C:vacuolar membrane"/>
    <property type="evidence" value="ECO:0007669"/>
    <property type="project" value="UniProtKB-SubCell"/>
</dbReference>
<dbReference type="InterPro" id="IPR051009">
    <property type="entry name" value="PRM"/>
</dbReference>
<dbReference type="PANTHER" id="PTHR36089">
    <property type="entry name" value="CHITIN SYNTHASE 3 COMPLEX PROTEIN CSI2-RELATED"/>
    <property type="match status" value="1"/>
</dbReference>
<dbReference type="PANTHER" id="PTHR36089:SF1">
    <property type="entry name" value="CHITIN SYNTHASE 3 COMPLEX PROTEIN CSI2-RELATED"/>
    <property type="match status" value="1"/>
</dbReference>
<keyword id="KW-0472">Membrane</keyword>
<keyword id="KW-0597">Phosphoprotein</keyword>
<keyword id="KW-0812">Transmembrane</keyword>
<keyword id="KW-1133">Transmembrane helix</keyword>
<keyword id="KW-0926">Vacuole</keyword>
<organism>
    <name type="scientific">Saccharomyces cerevisiae (strain YJM789)</name>
    <name type="common">Baker's yeast</name>
    <dbReference type="NCBI Taxonomy" id="307796"/>
    <lineage>
        <taxon>Eukaryota</taxon>
        <taxon>Fungi</taxon>
        <taxon>Dikarya</taxon>
        <taxon>Ascomycota</taxon>
        <taxon>Saccharomycotina</taxon>
        <taxon>Saccharomycetes</taxon>
        <taxon>Saccharomycetales</taxon>
        <taxon>Saccharomycetaceae</taxon>
        <taxon>Saccharomyces</taxon>
    </lineage>
</organism>
<reference key="1">
    <citation type="journal article" date="2007" name="Proc. Natl. Acad. Sci. U.S.A.">
        <title>Genome sequencing and comparative analysis of Saccharomyces cerevisiae strain YJM789.</title>
        <authorList>
            <person name="Wei W."/>
            <person name="McCusker J.H."/>
            <person name="Hyman R.W."/>
            <person name="Jones T."/>
            <person name="Ning Y."/>
            <person name="Cao Z."/>
            <person name="Gu Z."/>
            <person name="Bruno D."/>
            <person name="Miranda M."/>
            <person name="Nguyen M."/>
            <person name="Wilhelmy J."/>
            <person name="Komp C."/>
            <person name="Tamse R."/>
            <person name="Wang X."/>
            <person name="Jia P."/>
            <person name="Luedi P."/>
            <person name="Oefner P.J."/>
            <person name="David L."/>
            <person name="Dietrich F.S."/>
            <person name="Li Y."/>
            <person name="Davis R.W."/>
            <person name="Steinmetz L.M."/>
        </authorList>
    </citation>
    <scope>NUCLEOTIDE SEQUENCE [LARGE SCALE GENOMIC DNA]</scope>
    <source>
        <strain>YJM789</strain>
    </source>
</reference>
<evidence type="ECO:0000250" key="1"/>
<evidence type="ECO:0000250" key="2">
    <source>
        <dbReference type="UniProtKB" id="P53947"/>
    </source>
</evidence>
<evidence type="ECO:0000255" key="3"/>
<evidence type="ECO:0000256" key="4">
    <source>
        <dbReference type="SAM" id="MobiDB-lite"/>
    </source>
</evidence>
<evidence type="ECO:0000305" key="5"/>
<comment type="subcellular location">
    <subcellularLocation>
        <location evidence="1">Vacuole membrane</location>
        <topology evidence="1">Single-pass membrane protein</topology>
    </subcellularLocation>
</comment>
<comment type="similarity">
    <text evidence="5">Belongs to the PRM5 family.</text>
</comment>
<name>YNF8_YEAS7</name>
<protein>
    <recommendedName>
        <fullName>Vacuolar membrane protein SCY_4732</fullName>
    </recommendedName>
</protein>
<proteinExistence type="inferred from homology"/>
<gene>
    <name type="ORF">SCY_4732</name>
</gene>
<feature type="chain" id="PRO_0000409322" description="Vacuolar membrane protein SCY_4732">
    <location>
        <begin position="1"/>
        <end position="314"/>
    </location>
</feature>
<feature type="transmembrane region" description="Helical" evidence="3">
    <location>
        <begin position="93"/>
        <end position="113"/>
    </location>
</feature>
<feature type="region of interest" description="Disordered" evidence="4">
    <location>
        <begin position="32"/>
        <end position="61"/>
    </location>
</feature>
<feature type="region of interest" description="Disordered" evidence="4">
    <location>
        <begin position="240"/>
        <end position="309"/>
    </location>
</feature>
<feature type="compositionally biased region" description="Basic and acidic residues" evidence="4">
    <location>
        <begin position="254"/>
        <end position="269"/>
    </location>
</feature>
<feature type="modified residue" description="Phosphoserine" evidence="2">
    <location>
        <position position="148"/>
    </location>
</feature>
<feature type="modified residue" description="Phosphoserine" evidence="2">
    <location>
        <position position="254"/>
    </location>
</feature>
<feature type="modified residue" description="Phosphoserine" evidence="2">
    <location>
        <position position="274"/>
    </location>
</feature>
<accession>A6ZS21</accession>